<gene>
    <name type="primary">prfA</name>
    <name type="ordered locus">BB_0196</name>
</gene>
<organism>
    <name type="scientific">Borreliella burgdorferi (strain ATCC 35210 / DSM 4680 / CIP 102532 / B31)</name>
    <name type="common">Borrelia burgdorferi</name>
    <dbReference type="NCBI Taxonomy" id="224326"/>
    <lineage>
        <taxon>Bacteria</taxon>
        <taxon>Pseudomonadati</taxon>
        <taxon>Spirochaetota</taxon>
        <taxon>Spirochaetia</taxon>
        <taxon>Spirochaetales</taxon>
        <taxon>Borreliaceae</taxon>
        <taxon>Borreliella</taxon>
    </lineage>
</organism>
<proteinExistence type="inferred from homology"/>
<protein>
    <recommendedName>
        <fullName>Peptide chain release factor 1</fullName>
        <shortName>RF-1</shortName>
    </recommendedName>
</protein>
<sequence length="357" mass="41532">MLLEKLNSATSKIKLIEEKLQDINLIKDQKKYSKIIKEYTYLEKINTKKIEYEKILSQINDTKTILEKEDQQEMKELIKQELIDLDKKKEDLEHQIKILLLPQDENDSKNIIIEIRAGTGGEEAALFANNLYSMYIKYSEKKKWKTEIINFNETELGGFKEIIFEIKGKDVFKKLKYESGVHRVQRIPITESNGRLQTSAATVAVLPNIEETEIDINEKDLRIDVYRSSGAGGQHVNTTDSAVRITHLPTGIVVQCQNERSQHKNKDQAMKILRARLYEFEDSKKQEQRSSNRKQQVGSGDRSERIRTYNFPQNRITDHRANITLYKLEEFMQGELDPLLDPLMIALQEQELKSNSI</sequence>
<evidence type="ECO:0000250" key="1"/>
<evidence type="ECO:0000256" key="2">
    <source>
        <dbReference type="SAM" id="MobiDB-lite"/>
    </source>
</evidence>
<evidence type="ECO:0000305" key="3"/>
<comment type="function">
    <text evidence="1">Peptide chain release factor 1 directs the termination of translation in response to the peptide chain termination codons UAG and UAA.</text>
</comment>
<comment type="subcellular location">
    <subcellularLocation>
        <location evidence="1">Cytoplasm</location>
    </subcellularLocation>
</comment>
<comment type="PTM">
    <text evidence="1">Methylated by PrmC. Methylation increases the termination efficiency of RF1 (By similarity).</text>
</comment>
<comment type="similarity">
    <text evidence="3">Belongs to the prokaryotic/mitochondrial release factor family.</text>
</comment>
<keyword id="KW-0963">Cytoplasm</keyword>
<keyword id="KW-0488">Methylation</keyword>
<keyword id="KW-0648">Protein biosynthesis</keyword>
<keyword id="KW-1185">Reference proteome</keyword>
<feature type="chain" id="PRO_0000177639" description="Peptide chain release factor 1">
    <location>
        <begin position="1"/>
        <end position="357"/>
    </location>
</feature>
<feature type="region of interest" description="Disordered" evidence="2">
    <location>
        <begin position="283"/>
        <end position="313"/>
    </location>
</feature>
<feature type="modified residue" description="N5-methylglutamine" evidence="1">
    <location>
        <position position="234"/>
    </location>
</feature>
<reference key="1">
    <citation type="journal article" date="1997" name="Nature">
        <title>Genomic sequence of a Lyme disease spirochaete, Borrelia burgdorferi.</title>
        <authorList>
            <person name="Fraser C.M."/>
            <person name="Casjens S."/>
            <person name="Huang W.M."/>
            <person name="Sutton G.G."/>
            <person name="Clayton R.A."/>
            <person name="Lathigra R."/>
            <person name="White O."/>
            <person name="Ketchum K.A."/>
            <person name="Dodson R.J."/>
            <person name="Hickey E.K."/>
            <person name="Gwinn M.L."/>
            <person name="Dougherty B.A."/>
            <person name="Tomb J.-F."/>
            <person name="Fleischmann R.D."/>
            <person name="Richardson D.L."/>
            <person name="Peterson J.D."/>
            <person name="Kerlavage A.R."/>
            <person name="Quackenbush J."/>
            <person name="Salzberg S.L."/>
            <person name="Hanson M."/>
            <person name="van Vugt R."/>
            <person name="Palmer N."/>
            <person name="Adams M.D."/>
            <person name="Gocayne J.D."/>
            <person name="Weidman J.F."/>
            <person name="Utterback T.R."/>
            <person name="Watthey L."/>
            <person name="McDonald L.A."/>
            <person name="Artiach P."/>
            <person name="Bowman C."/>
            <person name="Garland S.A."/>
            <person name="Fujii C."/>
            <person name="Cotton M.D."/>
            <person name="Horst K."/>
            <person name="Roberts K.M."/>
            <person name="Hatch B."/>
            <person name="Smith H.O."/>
            <person name="Venter J.C."/>
        </authorList>
    </citation>
    <scope>NUCLEOTIDE SEQUENCE [LARGE SCALE GENOMIC DNA]</scope>
    <source>
        <strain>ATCC 35210 / DSM 4680 / CIP 102532 / B31</strain>
    </source>
</reference>
<dbReference type="EMBL" id="AE000783">
    <property type="status" value="NOT_ANNOTATED_CDS"/>
    <property type="molecule type" value="Genomic_DNA"/>
</dbReference>
<dbReference type="PIR" id="D70124">
    <property type="entry name" value="D70124"/>
</dbReference>
<dbReference type="RefSeq" id="WP_002656432.1">
    <property type="nucleotide sequence ID" value="NC_001318.1"/>
</dbReference>
<dbReference type="RefSeq" id="YP_008686566.1">
    <property type="nucleotide sequence ID" value="NC_001318.1"/>
</dbReference>
<dbReference type="SMR" id="O51214"/>
<dbReference type="GeneID" id="56567622"/>
<dbReference type="PATRIC" id="fig|224326.49.peg.592"/>
<dbReference type="OrthoDB" id="9806673at2"/>
<dbReference type="Proteomes" id="UP000001807">
    <property type="component" value="Chromosome"/>
</dbReference>
<dbReference type="GO" id="GO:0005829">
    <property type="term" value="C:cytosol"/>
    <property type="evidence" value="ECO:0000314"/>
    <property type="project" value="CAFA"/>
</dbReference>
<dbReference type="GO" id="GO:0016149">
    <property type="term" value="F:translation release factor activity, codon specific"/>
    <property type="evidence" value="ECO:0007669"/>
    <property type="project" value="UniProtKB-UniRule"/>
</dbReference>
<dbReference type="FunFam" id="3.30.160.20:FF:000004">
    <property type="entry name" value="Peptide chain release factor 1"/>
    <property type="match status" value="1"/>
</dbReference>
<dbReference type="FunFam" id="3.30.70.1660:FF:000002">
    <property type="entry name" value="Peptide chain release factor 1"/>
    <property type="match status" value="1"/>
</dbReference>
<dbReference type="FunFam" id="3.30.70.1660:FF:000004">
    <property type="entry name" value="Peptide chain release factor 1"/>
    <property type="match status" value="1"/>
</dbReference>
<dbReference type="Gene3D" id="3.30.160.20">
    <property type="match status" value="1"/>
</dbReference>
<dbReference type="Gene3D" id="3.30.70.1660">
    <property type="match status" value="2"/>
</dbReference>
<dbReference type="Gene3D" id="6.10.140.1950">
    <property type="match status" value="1"/>
</dbReference>
<dbReference type="HAMAP" id="MF_00093">
    <property type="entry name" value="Rel_fac_1"/>
    <property type="match status" value="1"/>
</dbReference>
<dbReference type="InterPro" id="IPR005139">
    <property type="entry name" value="PCRF"/>
</dbReference>
<dbReference type="InterPro" id="IPR000352">
    <property type="entry name" value="Pep_chain_release_fac_I"/>
</dbReference>
<dbReference type="InterPro" id="IPR045853">
    <property type="entry name" value="Pep_chain_release_fac_I_sf"/>
</dbReference>
<dbReference type="InterPro" id="IPR050057">
    <property type="entry name" value="Prokaryotic/Mito_RF"/>
</dbReference>
<dbReference type="InterPro" id="IPR004373">
    <property type="entry name" value="RF-1"/>
</dbReference>
<dbReference type="NCBIfam" id="TIGR00019">
    <property type="entry name" value="prfA"/>
    <property type="match status" value="1"/>
</dbReference>
<dbReference type="NCBIfam" id="NF001859">
    <property type="entry name" value="PRK00591.1"/>
    <property type="match status" value="1"/>
</dbReference>
<dbReference type="PANTHER" id="PTHR43804">
    <property type="entry name" value="LD18447P"/>
    <property type="match status" value="1"/>
</dbReference>
<dbReference type="PANTHER" id="PTHR43804:SF7">
    <property type="entry name" value="LD18447P"/>
    <property type="match status" value="1"/>
</dbReference>
<dbReference type="Pfam" id="PF03462">
    <property type="entry name" value="PCRF"/>
    <property type="match status" value="1"/>
</dbReference>
<dbReference type="Pfam" id="PF00472">
    <property type="entry name" value="RF-1"/>
    <property type="match status" value="1"/>
</dbReference>
<dbReference type="SMART" id="SM00937">
    <property type="entry name" value="PCRF"/>
    <property type="match status" value="1"/>
</dbReference>
<dbReference type="SUPFAM" id="SSF75620">
    <property type="entry name" value="Release factor"/>
    <property type="match status" value="1"/>
</dbReference>
<dbReference type="PROSITE" id="PS00745">
    <property type="entry name" value="RF_PROK_I"/>
    <property type="match status" value="1"/>
</dbReference>
<accession>O51214</accession>
<name>RF1_BORBU</name>